<accession>Q71V11</accession>
<feature type="chain" id="PRO_0000191501" description="Sperm protamine P1">
    <location>
        <begin position="1"/>
        <end position="63"/>
    </location>
</feature>
<feature type="region of interest" description="Disordered" evidence="2">
    <location>
        <begin position="1"/>
        <end position="63"/>
    </location>
</feature>
<evidence type="ECO:0000250" key="1"/>
<evidence type="ECO:0000256" key="2">
    <source>
        <dbReference type="SAM" id="MobiDB-lite"/>
    </source>
</evidence>
<evidence type="ECO:0000305" key="3"/>
<name>HSP1_PARRT</name>
<organism>
    <name type="scientific">Paramurexia rothschildi</name>
    <name type="common">Broad-striped dasyure</name>
    <name type="synonym">Murexia rothschildi</name>
    <dbReference type="NCBI Taxonomy" id="418657"/>
    <lineage>
        <taxon>Eukaryota</taxon>
        <taxon>Metazoa</taxon>
        <taxon>Chordata</taxon>
        <taxon>Craniata</taxon>
        <taxon>Vertebrata</taxon>
        <taxon>Euteleostomi</taxon>
        <taxon>Mammalia</taxon>
        <taxon>Metatheria</taxon>
        <taxon>Dasyuromorphia</taxon>
        <taxon>Dasyuridae</taxon>
        <taxon>Murexia</taxon>
    </lineage>
</organism>
<keyword id="KW-0158">Chromosome</keyword>
<keyword id="KW-0217">Developmental protein</keyword>
<keyword id="KW-0221">Differentiation</keyword>
<keyword id="KW-0226">DNA condensation</keyword>
<keyword id="KW-0238">DNA-binding</keyword>
<keyword id="KW-0544">Nucleosome core</keyword>
<keyword id="KW-0539">Nucleus</keyword>
<keyword id="KW-0744">Spermatogenesis</keyword>
<dbReference type="EMBL" id="AF038302">
    <property type="protein sequence ID" value="AAC15629.1"/>
    <property type="molecule type" value="Genomic_DNA"/>
</dbReference>
<dbReference type="GO" id="GO:0000786">
    <property type="term" value="C:nucleosome"/>
    <property type="evidence" value="ECO:0007669"/>
    <property type="project" value="UniProtKB-KW"/>
</dbReference>
<dbReference type="GO" id="GO:0005634">
    <property type="term" value="C:nucleus"/>
    <property type="evidence" value="ECO:0007669"/>
    <property type="project" value="UniProtKB-SubCell"/>
</dbReference>
<dbReference type="GO" id="GO:0003677">
    <property type="term" value="F:DNA binding"/>
    <property type="evidence" value="ECO:0007669"/>
    <property type="project" value="UniProtKB-KW"/>
</dbReference>
<dbReference type="GO" id="GO:0030261">
    <property type="term" value="P:chromosome condensation"/>
    <property type="evidence" value="ECO:0007669"/>
    <property type="project" value="UniProtKB-KW"/>
</dbReference>
<dbReference type="GO" id="GO:0035092">
    <property type="term" value="P:sperm DNA condensation"/>
    <property type="evidence" value="ECO:0007669"/>
    <property type="project" value="InterPro"/>
</dbReference>
<dbReference type="InterPro" id="IPR000221">
    <property type="entry name" value="Protamine_P1"/>
</dbReference>
<dbReference type="PROSITE" id="PS00048">
    <property type="entry name" value="PROTAMINE_P1"/>
    <property type="match status" value="1"/>
</dbReference>
<comment type="function">
    <text evidence="1">Protamines substitute for histones in the chromatin of sperm during the haploid phase of spermatogenesis. They compact sperm DNA into a highly condensed, stable and inactive complex (By similarity).</text>
</comment>
<comment type="subcellular location">
    <subcellularLocation>
        <location evidence="1">Nucleus</location>
    </subcellularLocation>
    <subcellularLocation>
        <location evidence="1">Chromosome</location>
    </subcellularLocation>
</comment>
<comment type="tissue specificity">
    <text>Testis.</text>
</comment>
<comment type="similarity">
    <text evidence="3">Belongs to the protamine P1 family.</text>
</comment>
<gene>
    <name type="primary">PRM1</name>
</gene>
<sequence>MARYRRHSRSRSRSRYRRRRRRRSRHHNRRRTYRRSRRHSRRRRGRRRGYSRRRYSRRGRRRY</sequence>
<proteinExistence type="evidence at transcript level"/>
<protein>
    <recommendedName>
        <fullName>Sperm protamine P1</fullName>
    </recommendedName>
</protein>
<reference key="1">
    <citation type="journal article" date="1998" name="J. Mammal.">
        <title>Phylogeny of the dasyurid marsupial genus Antechinus based on cytochrome-b, 12S-rRNA, and protamine-P1 genes.</title>
        <authorList>
            <person name="Armstrong L.A."/>
            <person name="Krajewski C."/>
            <person name="Westerman M."/>
        </authorList>
    </citation>
    <scope>NUCLEOTIDE SEQUENCE [GENOMIC DNA]</scope>
</reference>